<keyword id="KW-0007">Acetylation</keyword>
<keyword id="KW-0010">Activator</keyword>
<keyword id="KW-0158">Chromosome</keyword>
<keyword id="KW-0963">Cytoplasm</keyword>
<keyword id="KW-1017">Isopeptide bond</keyword>
<keyword id="KW-0539">Nucleus</keyword>
<keyword id="KW-0597">Phosphoprotein</keyword>
<keyword id="KW-1185">Reference proteome</keyword>
<keyword id="KW-0779">Telomere</keyword>
<keyword id="KW-0804">Transcription</keyword>
<keyword id="KW-0805">Transcription regulation</keyword>
<keyword id="KW-0832">Ubl conjugation</keyword>
<organism>
    <name type="scientific">Bos taurus</name>
    <name type="common">Bovine</name>
    <dbReference type="NCBI Taxonomy" id="9913"/>
    <lineage>
        <taxon>Eukaryota</taxon>
        <taxon>Metazoa</taxon>
        <taxon>Chordata</taxon>
        <taxon>Craniata</taxon>
        <taxon>Vertebrata</taxon>
        <taxon>Euteleostomi</taxon>
        <taxon>Mammalia</taxon>
        <taxon>Eutheria</taxon>
        <taxon>Laurasiatheria</taxon>
        <taxon>Artiodactyla</taxon>
        <taxon>Ruminantia</taxon>
        <taxon>Pecora</taxon>
        <taxon>Bovidae</taxon>
        <taxon>Bovinae</taxon>
        <taxon>Bos</taxon>
    </lineage>
</organism>
<protein>
    <recommendedName>
        <fullName>Telomeric repeat-binding factor 2-interacting protein 1</fullName>
        <shortName>TERF2-interacting telomeric protein 1</shortName>
        <shortName>TRF2-interacting telomeric protein 1</shortName>
    </recommendedName>
    <alternativeName>
        <fullName>Repressor/activator protein 1 homolog</fullName>
        <shortName>RAP1 homolog</shortName>
    </alternativeName>
</protein>
<feature type="initiator methionine" description="Removed" evidence="3">
    <location>
        <position position="1"/>
    </location>
</feature>
<feature type="chain" id="PRO_0000398639" description="Telomeric repeat-binding factor 2-interacting protein 1">
    <location>
        <begin position="2"/>
        <end position="399"/>
    </location>
</feature>
<feature type="domain" description="BRCT">
    <location>
        <begin position="10"/>
        <end position="101"/>
    </location>
</feature>
<feature type="domain" description="Myb-like">
    <location>
        <begin position="130"/>
        <end position="190"/>
    </location>
</feature>
<feature type="region of interest" description="Disordered" evidence="5">
    <location>
        <begin position="1"/>
        <end position="21"/>
    </location>
</feature>
<feature type="region of interest" description="Disordered" evidence="5">
    <location>
        <begin position="199"/>
        <end position="245"/>
    </location>
</feature>
<feature type="region of interest" description="Disordered" evidence="5">
    <location>
        <begin position="279"/>
        <end position="309"/>
    </location>
</feature>
<feature type="short sequence motif" description="Nuclear localization signal" evidence="4">
    <location>
        <begin position="383"/>
        <end position="399"/>
    </location>
</feature>
<feature type="compositionally biased region" description="Acidic residues" evidence="5">
    <location>
        <begin position="281"/>
        <end position="304"/>
    </location>
</feature>
<feature type="modified residue" description="N-acetylalanine" evidence="3">
    <location>
        <position position="2"/>
    </location>
</feature>
<feature type="modified residue" description="Phosphoserine" evidence="3">
    <location>
        <position position="36"/>
    </location>
</feature>
<feature type="modified residue" description="Phosphoserine" evidence="3">
    <location>
        <position position="43"/>
    </location>
</feature>
<feature type="modified residue" description="Phosphoserine" evidence="3">
    <location>
        <position position="156"/>
    </location>
</feature>
<feature type="modified residue" description="Phosphoserine" evidence="3">
    <location>
        <position position="158"/>
    </location>
</feature>
<feature type="modified residue" description="Phosphoserine" evidence="3">
    <location>
        <position position="205"/>
    </location>
</feature>
<feature type="modified residue" description="Phosphoserine" evidence="3">
    <location>
        <position position="208"/>
    </location>
</feature>
<feature type="cross-link" description="Glycyl lysine isopeptide (Lys-Gly) (interchain with G-Cter in SUMO2)" evidence="3">
    <location>
        <position position="114"/>
    </location>
</feature>
<feature type="cross-link" description="Glycyl lysine isopeptide (Lys-Gly) (interchain with G-Cter in SUMO2)" evidence="3">
    <location>
        <position position="196"/>
    </location>
</feature>
<feature type="cross-link" description="Glycyl lysine isopeptide (Lys-Gly) (interchain with G-Cter in SUMO2)" evidence="3">
    <location>
        <position position="210"/>
    </location>
</feature>
<feature type="cross-link" description="Glycyl lysine isopeptide (Lys-Gly) (interchain with G-Cter in SUMO2)" evidence="3">
    <location>
        <position position="214"/>
    </location>
</feature>
<feature type="cross-link" description="Glycyl lysine isopeptide (Lys-Gly) (interchain with G-Cter in SUMO2)" evidence="3">
    <location>
        <position position="242"/>
    </location>
</feature>
<feature type="cross-link" description="Glycyl lysine isopeptide (Lys-Gly) (interchain with G-Cter in SUMO2)" evidence="3">
    <location>
        <position position="372"/>
    </location>
</feature>
<accession>Q0VCT3</accession>
<dbReference type="EMBL" id="BC120017">
    <property type="protein sequence ID" value="AAI20018.1"/>
    <property type="molecule type" value="mRNA"/>
</dbReference>
<dbReference type="RefSeq" id="NP_001068880.1">
    <property type="nucleotide sequence ID" value="NM_001075412.2"/>
</dbReference>
<dbReference type="SMR" id="Q0VCT3"/>
<dbReference type="FunCoup" id="Q0VCT3">
    <property type="interactions" value="2989"/>
</dbReference>
<dbReference type="STRING" id="9913.ENSBTAP00000020830"/>
<dbReference type="PaxDb" id="9913-ENSBTAP00000020830"/>
<dbReference type="Ensembl" id="ENSBTAT00000020830.3">
    <property type="protein sequence ID" value="ENSBTAP00000020830.2"/>
    <property type="gene ID" value="ENSBTAG00000015686.4"/>
</dbReference>
<dbReference type="GeneID" id="509625"/>
<dbReference type="KEGG" id="bta:509625"/>
<dbReference type="CTD" id="54386"/>
<dbReference type="VEuPathDB" id="HostDB:ENSBTAG00000015686"/>
<dbReference type="VGNC" id="VGNC:50057">
    <property type="gene designation" value="TERF2IP"/>
</dbReference>
<dbReference type="eggNOG" id="ENOG502RPXS">
    <property type="taxonomic scope" value="Eukaryota"/>
</dbReference>
<dbReference type="GeneTree" id="ENSGT00390000005351"/>
<dbReference type="HOGENOM" id="CLU_028192_0_0_1"/>
<dbReference type="InParanoid" id="Q0VCT3"/>
<dbReference type="OMA" id="SDGYPIW"/>
<dbReference type="OrthoDB" id="435460at2759"/>
<dbReference type="TreeFam" id="TF332348"/>
<dbReference type="Reactome" id="R-BTA-110330">
    <property type="pathway name" value="Recognition and association of DNA glycosylase with site containing an affected purine"/>
</dbReference>
<dbReference type="Reactome" id="R-BTA-110331">
    <property type="pathway name" value="Cleavage of the damaged purine"/>
</dbReference>
<dbReference type="Reactome" id="R-BTA-171306">
    <property type="pathway name" value="Packaging Of Telomere Ends"/>
</dbReference>
<dbReference type="Reactome" id="R-BTA-171319">
    <property type="pathway name" value="Telomere Extension By Telomerase"/>
</dbReference>
<dbReference type="Reactome" id="R-BTA-174411">
    <property type="pathway name" value="Polymerase switching on the C-strand of the telomere"/>
</dbReference>
<dbReference type="Reactome" id="R-BTA-174414">
    <property type="pathway name" value="Processive synthesis on the C-strand of the telomere"/>
</dbReference>
<dbReference type="Reactome" id="R-BTA-174417">
    <property type="pathway name" value="Telomere C-strand (Lagging Strand) Synthesis"/>
</dbReference>
<dbReference type="Reactome" id="R-BTA-174430">
    <property type="pathway name" value="Telomere C-strand synthesis initiation"/>
</dbReference>
<dbReference type="Reactome" id="R-BTA-174437">
    <property type="pathway name" value="Removal of the Flap Intermediate from the C-strand"/>
</dbReference>
<dbReference type="Reactome" id="R-BTA-2559586">
    <property type="pathway name" value="DNA Damage/Telomere Stress Induced Senescence"/>
</dbReference>
<dbReference type="Reactome" id="R-BTA-9670095">
    <property type="pathway name" value="Inhibition of DNA recombination at telomere"/>
</dbReference>
<dbReference type="Proteomes" id="UP000009136">
    <property type="component" value="Chromosome 18"/>
</dbReference>
<dbReference type="Bgee" id="ENSBTAG00000015686">
    <property type="expression patterns" value="Expressed in corpus epididymis and 106 other cell types or tissues"/>
</dbReference>
<dbReference type="GO" id="GO:0000781">
    <property type="term" value="C:chromosome, telomeric region"/>
    <property type="evidence" value="ECO:0000250"/>
    <property type="project" value="UniProtKB"/>
</dbReference>
<dbReference type="GO" id="GO:0005737">
    <property type="term" value="C:cytoplasm"/>
    <property type="evidence" value="ECO:0000250"/>
    <property type="project" value="UniProtKB"/>
</dbReference>
<dbReference type="GO" id="GO:0001673">
    <property type="term" value="C:male germ cell nucleus"/>
    <property type="evidence" value="ECO:0007669"/>
    <property type="project" value="Ensembl"/>
</dbReference>
<dbReference type="GO" id="GO:0016604">
    <property type="term" value="C:nuclear body"/>
    <property type="evidence" value="ECO:0007669"/>
    <property type="project" value="Ensembl"/>
</dbReference>
<dbReference type="GO" id="GO:0005634">
    <property type="term" value="C:nucleus"/>
    <property type="evidence" value="ECO:0000250"/>
    <property type="project" value="UniProtKB"/>
</dbReference>
<dbReference type="GO" id="GO:0070187">
    <property type="term" value="C:shelterin complex"/>
    <property type="evidence" value="ECO:0000318"/>
    <property type="project" value="GO_Central"/>
</dbReference>
<dbReference type="GO" id="GO:0098505">
    <property type="term" value="F:G-rich strand telomeric DNA binding"/>
    <property type="evidence" value="ECO:0007669"/>
    <property type="project" value="Ensembl"/>
</dbReference>
<dbReference type="GO" id="GO:0019902">
    <property type="term" value="F:phosphatase binding"/>
    <property type="evidence" value="ECO:0007669"/>
    <property type="project" value="Ensembl"/>
</dbReference>
<dbReference type="GO" id="GO:0042162">
    <property type="term" value="F:telomeric DNA binding"/>
    <property type="evidence" value="ECO:0000318"/>
    <property type="project" value="GO_Central"/>
</dbReference>
<dbReference type="GO" id="GO:0035556">
    <property type="term" value="P:intracellular signal transduction"/>
    <property type="evidence" value="ECO:0007669"/>
    <property type="project" value="Ensembl"/>
</dbReference>
<dbReference type="GO" id="GO:0048239">
    <property type="term" value="P:negative regulation of DNA recombination at telomere"/>
    <property type="evidence" value="ECO:0000250"/>
    <property type="project" value="UniProtKB"/>
</dbReference>
<dbReference type="GO" id="GO:0032205">
    <property type="term" value="P:negative regulation of telomere maintenance"/>
    <property type="evidence" value="ECO:0007669"/>
    <property type="project" value="Ensembl"/>
</dbReference>
<dbReference type="GO" id="GO:0043123">
    <property type="term" value="P:positive regulation of canonical NF-kappaB signal transduction"/>
    <property type="evidence" value="ECO:0000250"/>
    <property type="project" value="UniProtKB"/>
</dbReference>
<dbReference type="GO" id="GO:0051092">
    <property type="term" value="P:positive regulation of NF-kappaB transcription factor activity"/>
    <property type="evidence" value="ECO:0000250"/>
    <property type="project" value="UniProtKB"/>
</dbReference>
<dbReference type="GO" id="GO:1901224">
    <property type="term" value="P:positive regulation of non-canonical NF-kappaB signal transduction"/>
    <property type="evidence" value="ECO:0007669"/>
    <property type="project" value="Ensembl"/>
</dbReference>
<dbReference type="GO" id="GO:0031848">
    <property type="term" value="P:protection from non-homologous end joining at telomere"/>
    <property type="evidence" value="ECO:0000318"/>
    <property type="project" value="GO_Central"/>
</dbReference>
<dbReference type="GO" id="GO:0070198">
    <property type="term" value="P:protein localization to chromosome, telomeric region"/>
    <property type="evidence" value="ECO:0007669"/>
    <property type="project" value="Ensembl"/>
</dbReference>
<dbReference type="GO" id="GO:0006355">
    <property type="term" value="P:regulation of DNA-templated transcription"/>
    <property type="evidence" value="ECO:0000250"/>
    <property type="project" value="UniProtKB"/>
</dbReference>
<dbReference type="GO" id="GO:0010569">
    <property type="term" value="P:regulation of double-strand break repair via homologous recombination"/>
    <property type="evidence" value="ECO:0000250"/>
    <property type="project" value="UniProtKB"/>
</dbReference>
<dbReference type="GO" id="GO:0010833">
    <property type="term" value="P:telomere maintenance via telomere lengthening"/>
    <property type="evidence" value="ECO:0000250"/>
    <property type="project" value="UniProtKB"/>
</dbReference>
<dbReference type="CDD" id="cd11655">
    <property type="entry name" value="rap1_myb-like"/>
    <property type="match status" value="1"/>
</dbReference>
<dbReference type="FunFam" id="1.10.10.2170:FF:000001">
    <property type="entry name" value="Telomeric repeat-binding factor 2-interacting protein 1"/>
    <property type="match status" value="1"/>
</dbReference>
<dbReference type="FunFam" id="1.10.10.60:FF:000246">
    <property type="entry name" value="Telomeric repeat-binding factor 2-interacting protein 1"/>
    <property type="match status" value="1"/>
</dbReference>
<dbReference type="Gene3D" id="1.10.10.2170">
    <property type="match status" value="1"/>
</dbReference>
<dbReference type="Gene3D" id="3.40.50.10190">
    <property type="entry name" value="BRCT domain"/>
    <property type="match status" value="1"/>
</dbReference>
<dbReference type="Gene3D" id="1.10.10.60">
    <property type="entry name" value="Homeodomain-like"/>
    <property type="match status" value="1"/>
</dbReference>
<dbReference type="InterPro" id="IPR001357">
    <property type="entry name" value="BRCT_dom"/>
</dbReference>
<dbReference type="InterPro" id="IPR036420">
    <property type="entry name" value="BRCT_dom_sf"/>
</dbReference>
<dbReference type="InterPro" id="IPR009057">
    <property type="entry name" value="Homeodomain-like_sf"/>
</dbReference>
<dbReference type="InterPro" id="IPR021661">
    <property type="entry name" value="Rap1_C"/>
</dbReference>
<dbReference type="InterPro" id="IPR038104">
    <property type="entry name" value="Rap1_C_sf"/>
</dbReference>
<dbReference type="InterPro" id="IPR039595">
    <property type="entry name" value="TE2IP/Rap1"/>
</dbReference>
<dbReference type="InterPro" id="IPR015010">
    <property type="entry name" value="TERF2IP_Myb"/>
</dbReference>
<dbReference type="PANTHER" id="PTHR16466">
    <property type="entry name" value="TELOMERE REPEAT-BINDING FACTOR 2-INTERACTING PROTEIN 1"/>
    <property type="match status" value="1"/>
</dbReference>
<dbReference type="PANTHER" id="PTHR16466:SF6">
    <property type="entry name" value="TELOMERIC REPEAT-BINDING FACTOR 2-INTERACTING PROTEIN 1"/>
    <property type="match status" value="1"/>
</dbReference>
<dbReference type="Pfam" id="PF16589">
    <property type="entry name" value="BRCT_2"/>
    <property type="match status" value="1"/>
</dbReference>
<dbReference type="Pfam" id="PF08914">
    <property type="entry name" value="Myb_Rap1"/>
    <property type="match status" value="1"/>
</dbReference>
<dbReference type="Pfam" id="PF11626">
    <property type="entry name" value="Rap1_C"/>
    <property type="match status" value="1"/>
</dbReference>
<dbReference type="SUPFAM" id="SSF46689">
    <property type="entry name" value="Homeodomain-like"/>
    <property type="match status" value="1"/>
</dbReference>
<name>TE2IP_BOVIN</name>
<proteinExistence type="evidence at transcript level"/>
<comment type="function">
    <text evidence="1">Acts both as a regulator of telomere function and as a transcription regulator. Involved in the regulation of telomere length and protection as a component of the shelterin complex (telosome). In contrast to other components of the shelterin complex, it is dispensible for telomere capping and does not participate in the protection of telomeres against non-homologous end-joining (NHEJ)-mediated repair. Instead, it is required to negatively regulate telomere recombination and is essential for repressing homology-directed repair (HDR), which can affect telomere length. Does not bind DNA directly: recruited to telomeric double-stranded 5'-TTAGGG-3' repeats via its interaction with TERF2. Independently of its function in telomeres, also acts as a transcription regulator: recruited to extratelomeric 5'-TTAGGG-3' sites via its association with TERF2 or other factors, and regulates gene expression. When cytoplasmic, associates with the I-kappa-B-kinase (IKK) complex and acts as a regulator of the NF-kappa-B signaling by promoting IKK-mediated phosphorylation of RELA/p65, leading to activate expression of NF-kappa-B target genes (By similarity).</text>
</comment>
<comment type="subunit">
    <text evidence="1">Associates with the I-kappa-B-kinase (IKK) core complex, composed of CHUK, IKBKB and IKBKG (By similarity). Homodimer. Component of the shelterin complex (telosome) composed of TERF1, TERF2, TINF2, TERF2IP ACD and POT1. Interacts with TERF2 (but not TERF1) with its C-terminus. Interacts with SLX4/BTBD12. Interacts with TERF2; the interaction is direct (By similarity).</text>
</comment>
<comment type="subcellular location">
    <subcellularLocation>
        <location evidence="2">Nucleus</location>
    </subcellularLocation>
    <subcellularLocation>
        <location evidence="2">Cytoplasm</location>
    </subcellularLocation>
    <subcellularLocation>
        <location evidence="2">Chromosome</location>
    </subcellularLocation>
    <subcellularLocation>
        <location evidence="2">Chromosome</location>
        <location evidence="2">Telomere</location>
    </subcellularLocation>
    <text evidence="2">Associates with chromosomes, both at telomeres and in extratelomeric sites. Also exists as a cytoplasmic form, where it associates with the IKK complex.</text>
</comment>
<comment type="similarity">
    <text evidence="6">Belongs to the RAP1 family.</text>
</comment>
<evidence type="ECO:0000250" key="1"/>
<evidence type="ECO:0000250" key="2">
    <source>
        <dbReference type="UniProtKB" id="Q91VL8"/>
    </source>
</evidence>
<evidence type="ECO:0000250" key="3">
    <source>
        <dbReference type="UniProtKB" id="Q9NYB0"/>
    </source>
</evidence>
<evidence type="ECO:0000255" key="4"/>
<evidence type="ECO:0000256" key="5">
    <source>
        <dbReference type="SAM" id="MobiDB-lite"/>
    </source>
</evidence>
<evidence type="ECO:0000305" key="6"/>
<gene>
    <name type="primary">TERF2IP</name>
    <name type="synonym">RAP1</name>
</gene>
<sequence>MAEAMELGKDPNGPTHSSTLFVREDGSSMSFYVRPSPAKRRLSTLILHGGGTLCRVQEPGAVLLAQPGEAAAEASGDFISTQYILDCVERNEKLELEAYRLGPAPAAYQAPETKPGVLAGGVAAAEPEPQSQAGRMVFTDADDVAIITYVKEHARSASSVTGNALWKAMEKSSLTQHSWQSMKDRYLKRLRGQEHKYLLGEAPVSPSSQKLKRKAEQDPEAADSGEPQNKRTPDLPEEEFEKEEIKENEAAVKKMLVEATREFEEIVVDESPDFEIHITMCDDDPCTPEEDSETQPDEEEEEEEKVSAPEVGAAIKIIRQLMEKFNLDLSTVTQAFLKNSGELEATSSFLESGQRADGYPIWSRQDDLDLQKDDEATRDALVKKFGAQNVARRIEFRKK</sequence>
<reference key="1">
    <citation type="submission" date="2006-08" db="EMBL/GenBank/DDBJ databases">
        <authorList>
            <consortium name="NIH - Mammalian Gene Collection (MGC) project"/>
        </authorList>
    </citation>
    <scope>NUCLEOTIDE SEQUENCE [LARGE SCALE MRNA]</scope>
    <source>
        <strain>Hereford</strain>
        <tissue>Fetal cerebellum</tissue>
    </source>
</reference>